<feature type="signal peptide" evidence="7">
    <location>
        <begin position="1"/>
        <end position="41"/>
    </location>
</feature>
<feature type="chain" id="PRO_0000008648" description="Neuroligin-4, X-linked">
    <location>
        <begin position="42"/>
        <end position="816"/>
    </location>
</feature>
<feature type="topological domain" description="Extracellular" evidence="3">
    <location>
        <begin position="42"/>
        <end position="676"/>
    </location>
</feature>
<feature type="transmembrane region" description="Helical" evidence="3">
    <location>
        <begin position="677"/>
        <end position="697"/>
    </location>
</feature>
<feature type="topological domain" description="Cytoplasmic" evidence="3">
    <location>
        <begin position="698"/>
        <end position="816"/>
    </location>
</feature>
<feature type="region of interest" description="Interaction with NRXN1">
    <location>
        <begin position="359"/>
        <end position="364"/>
    </location>
</feature>
<feature type="region of interest" description="Disordered" evidence="4">
    <location>
        <begin position="636"/>
        <end position="659"/>
    </location>
</feature>
<feature type="compositionally biased region" description="Basic and acidic residues" evidence="4">
    <location>
        <begin position="649"/>
        <end position="658"/>
    </location>
</feature>
<feature type="modified residue" description="Phosphoserine" evidence="2">
    <location>
        <position position="712"/>
    </location>
</feature>
<feature type="glycosylation site" description="N-linked (GlcNAc...) asparagine" evidence="9">
    <location>
        <position position="102"/>
    </location>
</feature>
<feature type="glycosylation site" description="N-linked (GlcNAc...) asparagine" evidence="9">
    <location>
        <position position="511"/>
    </location>
</feature>
<feature type="disulfide bond" evidence="9">
    <location>
        <begin position="110"/>
        <end position="146"/>
    </location>
</feature>
<feature type="disulfide bond" evidence="9">
    <location>
        <begin position="306"/>
        <end position="317"/>
    </location>
</feature>
<feature type="disulfide bond" evidence="9">
    <location>
        <begin position="476"/>
        <end position="510"/>
    </location>
</feature>
<feature type="splice variant" id="VSP_013270" description="In isoform 2." evidence="11">
    <original>D</original>
    <variation>DGANTKKNADDITSNDRGEDE</variation>
    <location>
        <position position="157"/>
    </location>
</feature>
<feature type="sequence variant" id="VAR_036576" description="In a colorectal cancer sample; somatic mutation; dbSNP:rs749477993." evidence="8">
    <original>G</original>
    <variation>S</variation>
    <location>
        <position position="214"/>
    </location>
</feature>
<feature type="sequence conflict" description="In Ref. 4; AAQ88925." evidence="12" ref="4">
    <location>
        <position position="456"/>
    </location>
</feature>
<feature type="strand" evidence="14">
    <location>
        <begin position="47"/>
        <end position="50"/>
    </location>
</feature>
<feature type="strand" evidence="14">
    <location>
        <begin position="53"/>
        <end position="56"/>
    </location>
</feature>
<feature type="strand" evidence="14">
    <location>
        <begin position="58"/>
        <end position="60"/>
    </location>
</feature>
<feature type="strand" evidence="14">
    <location>
        <begin position="70"/>
        <end position="77"/>
    </location>
</feature>
<feature type="helix" evidence="14">
    <location>
        <begin position="84"/>
        <end position="86"/>
    </location>
</feature>
<feature type="strand" evidence="14">
    <location>
        <begin position="98"/>
        <end position="102"/>
    </location>
</feature>
<feature type="turn" evidence="13">
    <location>
        <begin position="116"/>
        <end position="118"/>
    </location>
</feature>
<feature type="helix" evidence="14">
    <location>
        <begin position="119"/>
        <end position="122"/>
    </location>
</feature>
<feature type="helix" evidence="14">
    <location>
        <begin position="128"/>
        <end position="134"/>
    </location>
</feature>
<feature type="helix" evidence="14">
    <location>
        <begin position="136"/>
        <end position="140"/>
    </location>
</feature>
<feature type="strand" evidence="14">
    <location>
        <begin position="148"/>
        <end position="154"/>
    </location>
</feature>
<feature type="strand" evidence="14">
    <location>
        <begin position="166"/>
        <end position="172"/>
    </location>
</feature>
<feature type="turn" evidence="14">
    <location>
        <begin position="176"/>
        <end position="178"/>
    </location>
</feature>
<feature type="helix" evidence="14">
    <location>
        <begin position="182"/>
        <end position="184"/>
    </location>
</feature>
<feature type="helix" evidence="14">
    <location>
        <begin position="188"/>
        <end position="194"/>
    </location>
</feature>
<feature type="strand" evidence="14">
    <location>
        <begin position="197"/>
        <end position="201"/>
    </location>
</feature>
<feature type="helix" evidence="14">
    <location>
        <begin position="206"/>
        <end position="210"/>
    </location>
</feature>
<feature type="helix" evidence="14">
    <location>
        <begin position="222"/>
        <end position="237"/>
    </location>
</feature>
<feature type="helix" evidence="14">
    <location>
        <begin position="238"/>
        <end position="241"/>
    </location>
</feature>
<feature type="strand" evidence="14">
    <location>
        <begin position="243"/>
        <end position="253"/>
    </location>
</feature>
<feature type="helix" evidence="14">
    <location>
        <begin position="255"/>
        <end position="263"/>
    </location>
</feature>
<feature type="helix" evidence="14">
    <location>
        <begin position="267"/>
        <end position="269"/>
    </location>
</feature>
<feature type="turn" evidence="13">
    <location>
        <begin position="270"/>
        <end position="272"/>
    </location>
</feature>
<feature type="strand" evidence="14">
    <location>
        <begin position="274"/>
        <end position="280"/>
    </location>
</feature>
<feature type="strand" evidence="14">
    <location>
        <begin position="283"/>
        <end position="285"/>
    </location>
</feature>
<feature type="turn" evidence="14">
    <location>
        <begin position="286"/>
        <end position="288"/>
    </location>
</feature>
<feature type="helix" evidence="14">
    <location>
        <begin position="293"/>
        <end position="303"/>
    </location>
</feature>
<feature type="helix" evidence="14">
    <location>
        <begin position="311"/>
        <end position="319"/>
    </location>
</feature>
<feature type="helix" evidence="14">
    <location>
        <begin position="323"/>
        <end position="327"/>
    </location>
</feature>
<feature type="strand" evidence="14">
    <location>
        <begin position="339"/>
        <end position="341"/>
    </location>
</feature>
<feature type="strand" evidence="14">
    <location>
        <begin position="346"/>
        <end position="349"/>
    </location>
</feature>
<feature type="helix" evidence="14">
    <location>
        <begin position="353"/>
        <end position="358"/>
    </location>
</feature>
<feature type="helix" evidence="14">
    <location>
        <begin position="361"/>
        <end position="364"/>
    </location>
</feature>
<feature type="strand" evidence="14">
    <location>
        <begin position="365"/>
        <end position="372"/>
    </location>
</feature>
<feature type="turn" evidence="14">
    <location>
        <begin position="373"/>
        <end position="376"/>
    </location>
</feature>
<feature type="helix" evidence="14">
    <location>
        <begin position="377"/>
        <end position="380"/>
    </location>
</feature>
<feature type="turn" evidence="14">
    <location>
        <begin position="381"/>
        <end position="383"/>
    </location>
</feature>
<feature type="helix" evidence="14">
    <location>
        <begin position="392"/>
        <end position="406"/>
    </location>
</feature>
<feature type="strand" evidence="13">
    <location>
        <begin position="410"/>
        <end position="412"/>
    </location>
</feature>
<feature type="helix" evidence="14">
    <location>
        <begin position="413"/>
        <end position="423"/>
    </location>
</feature>
<feature type="helix" evidence="14">
    <location>
        <begin position="433"/>
        <end position="448"/>
    </location>
</feature>
<feature type="helix" evidence="14">
    <location>
        <begin position="450"/>
        <end position="461"/>
    </location>
</feature>
<feature type="strand" evidence="14">
    <location>
        <begin position="467"/>
        <end position="472"/>
    </location>
</feature>
<feature type="strand" evidence="13">
    <location>
        <begin position="478"/>
        <end position="481"/>
    </location>
</feature>
<feature type="turn" evidence="14">
    <location>
        <begin position="489"/>
        <end position="492"/>
    </location>
</feature>
<feature type="helix" evidence="14">
    <location>
        <begin position="493"/>
        <end position="496"/>
    </location>
</feature>
<feature type="helix" evidence="14">
    <location>
        <begin position="499"/>
        <end position="501"/>
    </location>
</feature>
<feature type="strand" evidence="14">
    <location>
        <begin position="505"/>
        <end position="507"/>
    </location>
</feature>
<feature type="helix" evidence="14">
    <location>
        <begin position="514"/>
        <end position="533"/>
    </location>
</feature>
<feature type="turn" evidence="14">
    <location>
        <begin position="564"/>
        <end position="566"/>
    </location>
</feature>
<feature type="strand" evidence="14">
    <location>
        <begin position="568"/>
        <end position="575"/>
    </location>
</feature>
<feature type="strand" evidence="14">
    <location>
        <begin position="577"/>
        <end position="581"/>
    </location>
</feature>
<feature type="helix" evidence="14">
    <location>
        <begin position="584"/>
        <end position="591"/>
    </location>
</feature>
<feature type="helix" evidence="14">
    <location>
        <begin position="594"/>
        <end position="596"/>
    </location>
</feature>
<sequence>MSRPQGLLWLPLLFTPVCVMLNSNVLLWLTALAIKFTLIDSQAQYPVVNTNYGKIRGLRTPLPNEILGPVEQYLGVPYASPPTGERRFQPPEPPSSWTGIRNTTQFAAVCPQHLDERSLLHDMLPIWFTANLDTLMTYVQDQNEDCLYLNIYVPTEDDIHDQNSKKPVMVYIHGGSYMEGTGNMIDGSILASYGNVIVITINYRLGILGFLSTGDQAAKGNYGLLDQIQALRWIEENVGAFGGDPKRVTIFGSGAGASCVSLLTLSHYSEGLFQKAIIQSGTALSSWAVNYQPAKYTRILADKVGCNMLDTTDMVECLRNKNYKELIQQTITPATYHIAFGPVIDGDVIPDDPQILMEQGEFLNYDIMLGVNQGEGLKFVDGIVDNEDGVTPNDFDFSVSNFVDNLYGYPEGKDTLRETIKFMYTDWADKENPETRRKTLVALFTDHQWVAPAVATADLHAQYGSPTYFYAFYHHCQSEMKPSWADSAHGDEVPYVFGIPMIGPTELFSCNFSKNDVMLSAVVMTYWTNFAKTGDPNQPVPQDTKFIHTKPNRFEEVAWSKYNPKDQLYLHIGLKPRVRDHYRATKVAFWLELVPHLHNLNEIFQYVSTTTKVPPPDMTSFPYGTRRSPAKIWPTTKRPAITPANNPKHSKDPHKTGPEDTTVLIETKRDYSTELSVTIAVGASLLFLNILAFAALYYKKDKRRHETHRRPSPQRNTTNDIAHIQNEEIMSLQMKQLEHDHECESLQAHDTLRLTCPPDYTLTLRRSPDDIPLMTPNTITMIPNTLTGMQPLHTFNTFSGGQNSTNLPHGHSTTRV</sequence>
<organism>
    <name type="scientific">Homo sapiens</name>
    <name type="common">Human</name>
    <dbReference type="NCBI Taxonomy" id="9606"/>
    <lineage>
        <taxon>Eukaryota</taxon>
        <taxon>Metazoa</taxon>
        <taxon>Chordata</taxon>
        <taxon>Craniata</taxon>
        <taxon>Vertebrata</taxon>
        <taxon>Euteleostomi</taxon>
        <taxon>Mammalia</taxon>
        <taxon>Eutheria</taxon>
        <taxon>Euarchontoglires</taxon>
        <taxon>Primates</taxon>
        <taxon>Haplorrhini</taxon>
        <taxon>Catarrhini</taxon>
        <taxon>Hominidae</taxon>
        <taxon>Homo</taxon>
    </lineage>
</organism>
<dbReference type="EMBL" id="AF376803">
    <property type="protein sequence ID" value="AAM46112.1"/>
    <property type="molecule type" value="mRNA"/>
</dbReference>
<dbReference type="EMBL" id="AB033086">
    <property type="protein sequence ID" value="BAA86574.1"/>
    <property type="status" value="ALT_INIT"/>
    <property type="molecule type" value="mRNA"/>
</dbReference>
<dbReference type="EMBL" id="BC034018">
    <property type="protein sequence ID" value="AAH34018.1"/>
    <property type="molecule type" value="mRNA"/>
</dbReference>
<dbReference type="EMBL" id="AY358562">
    <property type="protein sequence ID" value="AAQ88925.1"/>
    <property type="molecule type" value="mRNA"/>
</dbReference>
<dbReference type="CCDS" id="CCDS14126.1">
    <molecule id="Q8N0W4-1"/>
</dbReference>
<dbReference type="RefSeq" id="NP_001269074.1">
    <molecule id="Q8N0W4-1"/>
    <property type="nucleotide sequence ID" value="NM_001282145.2"/>
</dbReference>
<dbReference type="RefSeq" id="NP_001269075.1">
    <molecule id="Q8N0W4-1"/>
    <property type="nucleotide sequence ID" value="NM_001282146.2"/>
</dbReference>
<dbReference type="RefSeq" id="NP_065793.1">
    <molecule id="Q8N0W4-1"/>
    <property type="nucleotide sequence ID" value="NM_020742.4"/>
</dbReference>
<dbReference type="RefSeq" id="NP_851849.1">
    <molecule id="Q8N0W4-1"/>
    <property type="nucleotide sequence ID" value="NM_181332.3"/>
</dbReference>
<dbReference type="RefSeq" id="XP_005274621.1">
    <molecule id="Q8N0W4-2"/>
    <property type="nucleotide sequence ID" value="XM_005274564.4"/>
</dbReference>
<dbReference type="RefSeq" id="XP_005274622.1">
    <molecule id="Q8N0W4-2"/>
    <property type="nucleotide sequence ID" value="XM_005274565.3"/>
</dbReference>
<dbReference type="RefSeq" id="XP_005274623.1">
    <molecule id="Q8N0W4-2"/>
    <property type="nucleotide sequence ID" value="XM_005274566.5"/>
</dbReference>
<dbReference type="RefSeq" id="XP_006724567.1">
    <molecule id="Q8N0W4-2"/>
    <property type="nucleotide sequence ID" value="XM_006724504.3"/>
</dbReference>
<dbReference type="RefSeq" id="XP_011543849.1">
    <molecule id="Q8N0W4-2"/>
    <property type="nucleotide sequence ID" value="XM_011545547.3"/>
</dbReference>
<dbReference type="RefSeq" id="XP_011543850.1">
    <molecule id="Q8N0W4-2"/>
    <property type="nucleotide sequence ID" value="XM_011545548.3"/>
</dbReference>
<dbReference type="RefSeq" id="XP_016885179.1">
    <property type="nucleotide sequence ID" value="XM_017029690.1"/>
</dbReference>
<dbReference type="RefSeq" id="XP_016885180.1">
    <molecule id="Q8N0W4-1"/>
    <property type="nucleotide sequence ID" value="XM_017029691.2"/>
</dbReference>
<dbReference type="RefSeq" id="XP_016885181.1">
    <molecule id="Q8N0W4-1"/>
    <property type="nucleotide sequence ID" value="XM_017029692.2"/>
</dbReference>
<dbReference type="RefSeq" id="XP_016885182.1">
    <molecule id="Q8N0W4-1"/>
    <property type="nucleotide sequence ID" value="XM_017029693.2"/>
</dbReference>
<dbReference type="RefSeq" id="XP_047298237.1">
    <molecule id="Q8N0W4-1"/>
    <property type="nucleotide sequence ID" value="XM_047442281.1"/>
</dbReference>
<dbReference type="RefSeq" id="XP_047298238.1">
    <molecule id="Q8N0W4-1"/>
    <property type="nucleotide sequence ID" value="XM_047442282.1"/>
</dbReference>
<dbReference type="RefSeq" id="XP_054183419.1">
    <molecule id="Q8N0W4-2"/>
    <property type="nucleotide sequence ID" value="XM_054327444.1"/>
</dbReference>
<dbReference type="RefSeq" id="XP_054183420.1">
    <molecule id="Q8N0W4-2"/>
    <property type="nucleotide sequence ID" value="XM_054327445.1"/>
</dbReference>
<dbReference type="RefSeq" id="XP_054183421.1">
    <molecule id="Q8N0W4-2"/>
    <property type="nucleotide sequence ID" value="XM_054327446.1"/>
</dbReference>
<dbReference type="RefSeq" id="XP_054183422.1">
    <molecule id="Q8N0W4-2"/>
    <property type="nucleotide sequence ID" value="XM_054327447.1"/>
</dbReference>
<dbReference type="RefSeq" id="XP_054183423.1">
    <molecule id="Q8N0W4-2"/>
    <property type="nucleotide sequence ID" value="XM_054327448.1"/>
</dbReference>
<dbReference type="RefSeq" id="XP_054183424.1">
    <molecule id="Q8N0W4-2"/>
    <property type="nucleotide sequence ID" value="XM_054327449.1"/>
</dbReference>
<dbReference type="RefSeq" id="XP_054183425.1">
    <molecule id="Q8N0W4-1"/>
    <property type="nucleotide sequence ID" value="XM_054327450.1"/>
</dbReference>
<dbReference type="RefSeq" id="XP_054183426.1">
    <molecule id="Q8N0W4-1"/>
    <property type="nucleotide sequence ID" value="XM_054327451.1"/>
</dbReference>
<dbReference type="RefSeq" id="XP_054183427.1">
    <molecule id="Q8N0W4-1"/>
    <property type="nucleotide sequence ID" value="XM_054327452.1"/>
</dbReference>
<dbReference type="RefSeq" id="XP_054183428.1">
    <molecule id="Q8N0W4-1"/>
    <property type="nucleotide sequence ID" value="XM_054327453.1"/>
</dbReference>
<dbReference type="RefSeq" id="XP_054183429.1">
    <molecule id="Q8N0W4-1"/>
    <property type="nucleotide sequence ID" value="XM_054327454.1"/>
</dbReference>
<dbReference type="PDB" id="2WQZ">
    <property type="method" value="X-ray"/>
    <property type="resolution" value="3.90 A"/>
    <property type="chains" value="A/B=43-619"/>
</dbReference>
<dbReference type="PDB" id="2XB6">
    <property type="method" value="X-ray"/>
    <property type="resolution" value="2.60 A"/>
    <property type="chains" value="A/B=44-619"/>
</dbReference>
<dbReference type="PDB" id="3BE8">
    <property type="method" value="X-ray"/>
    <property type="resolution" value="2.20 A"/>
    <property type="chains" value="A/B=44-619"/>
</dbReference>
<dbReference type="PDBsum" id="2WQZ"/>
<dbReference type="PDBsum" id="2XB6"/>
<dbReference type="PDBsum" id="3BE8"/>
<dbReference type="SMR" id="Q8N0W4"/>
<dbReference type="BioGRID" id="121567">
    <property type="interactions" value="5"/>
</dbReference>
<dbReference type="FunCoup" id="Q8N0W4">
    <property type="interactions" value="235"/>
</dbReference>
<dbReference type="IntAct" id="Q8N0W4">
    <property type="interactions" value="5"/>
</dbReference>
<dbReference type="MINT" id="Q8N0W4"/>
<dbReference type="STRING" id="9606.ENSP00000370483"/>
<dbReference type="ESTHER" id="human-NLGN4X">
    <property type="family name" value="Neuroligin"/>
</dbReference>
<dbReference type="MEROPS" id="S09.988"/>
<dbReference type="TCDB" id="8.A.117.1.3">
    <property type="family name" value="the neuroligin (nlg) family"/>
</dbReference>
<dbReference type="GlyCosmos" id="Q8N0W4">
    <property type="glycosylation" value="2 sites, No reported glycans"/>
</dbReference>
<dbReference type="GlyGen" id="Q8N0W4">
    <property type="glycosylation" value="4 sites, 1 N-linked glycan (1 site)"/>
</dbReference>
<dbReference type="iPTMnet" id="Q8N0W4"/>
<dbReference type="PhosphoSitePlus" id="Q8N0W4"/>
<dbReference type="BioMuta" id="NLGN4X"/>
<dbReference type="DMDM" id="31076821"/>
<dbReference type="jPOST" id="Q8N0W4"/>
<dbReference type="MassIVE" id="Q8N0W4"/>
<dbReference type="PaxDb" id="9606-ENSP00000370485"/>
<dbReference type="PeptideAtlas" id="Q8N0W4"/>
<dbReference type="ProteomicsDB" id="71472">
    <molecule id="Q8N0W4-1"/>
</dbReference>
<dbReference type="ProteomicsDB" id="71473">
    <molecule id="Q8N0W4-2"/>
</dbReference>
<dbReference type="Pumba" id="Q8N0W4"/>
<dbReference type="Antibodypedia" id="469">
    <property type="antibodies" value="204 antibodies from 30 providers"/>
</dbReference>
<dbReference type="DNASU" id="57502"/>
<dbReference type="Ensembl" id="ENST00000275857.10">
    <molecule id="Q8N0W4-1"/>
    <property type="protein sequence ID" value="ENSP00000275857.6"/>
    <property type="gene ID" value="ENSG00000146938.16"/>
</dbReference>
<dbReference type="Ensembl" id="ENST00000381092.1">
    <molecule id="Q8N0W4-1"/>
    <property type="protein sequence ID" value="ENSP00000370482.1"/>
    <property type="gene ID" value="ENSG00000146938.16"/>
</dbReference>
<dbReference type="Ensembl" id="ENST00000381093.6">
    <molecule id="Q8N0W4-1"/>
    <property type="protein sequence ID" value="ENSP00000370483.3"/>
    <property type="gene ID" value="ENSG00000146938.16"/>
</dbReference>
<dbReference type="Ensembl" id="ENST00000381095.8">
    <molecule id="Q8N0W4-1"/>
    <property type="protein sequence ID" value="ENSP00000370485.3"/>
    <property type="gene ID" value="ENSG00000146938.16"/>
</dbReference>
<dbReference type="Ensembl" id="ENST00000538097.6">
    <molecule id="Q8N0W4-2"/>
    <property type="protein sequence ID" value="ENSP00000439203.3"/>
    <property type="gene ID" value="ENSG00000146938.16"/>
</dbReference>
<dbReference type="GeneID" id="57502"/>
<dbReference type="KEGG" id="hsa:57502"/>
<dbReference type="MANE-Select" id="ENST00000381095.8">
    <property type="protein sequence ID" value="ENSP00000370485.3"/>
    <property type="RefSeq nucleotide sequence ID" value="NM_181332.3"/>
    <property type="RefSeq protein sequence ID" value="NP_851849.1"/>
</dbReference>
<dbReference type="UCSC" id="uc004crq.5">
    <molecule id="Q8N0W4-1"/>
    <property type="organism name" value="human"/>
</dbReference>
<dbReference type="AGR" id="HGNC:14287"/>
<dbReference type="CTD" id="57502"/>
<dbReference type="DisGeNET" id="57502"/>
<dbReference type="GeneCards" id="NLGN4X"/>
<dbReference type="HGNC" id="HGNC:14287">
    <property type="gene designation" value="NLGN4X"/>
</dbReference>
<dbReference type="HPA" id="ENSG00000146938">
    <property type="expression patterns" value="Tissue enhanced (brain, lymphoid tissue, ovary)"/>
</dbReference>
<dbReference type="MalaCards" id="NLGN4X"/>
<dbReference type="MIM" id="300427">
    <property type="type" value="gene"/>
</dbReference>
<dbReference type="MIM" id="300495">
    <property type="type" value="phenotype"/>
</dbReference>
<dbReference type="neXtProt" id="NX_Q8N0W4"/>
<dbReference type="OpenTargets" id="ENSG00000146938"/>
<dbReference type="PharmGKB" id="PA31650"/>
<dbReference type="VEuPathDB" id="HostDB:ENSG00000146938"/>
<dbReference type="eggNOG" id="KOG1516">
    <property type="taxonomic scope" value="Eukaryota"/>
</dbReference>
<dbReference type="GeneTree" id="ENSGT00940000156607"/>
<dbReference type="InParanoid" id="Q8N0W4"/>
<dbReference type="OMA" id="HQQHMQN"/>
<dbReference type="OrthoDB" id="6846267at2759"/>
<dbReference type="PAN-GO" id="Q8N0W4">
    <property type="GO annotations" value="11 GO annotations based on evolutionary models"/>
</dbReference>
<dbReference type="PhylomeDB" id="Q8N0W4"/>
<dbReference type="TreeFam" id="TF326187"/>
<dbReference type="PathwayCommons" id="Q8N0W4"/>
<dbReference type="Reactome" id="R-HSA-6794361">
    <property type="pathway name" value="Neurexins and neuroligins"/>
</dbReference>
<dbReference type="SignaLink" id="Q8N0W4"/>
<dbReference type="SIGNOR" id="Q8N0W4"/>
<dbReference type="BioGRID-ORCS" id="57502">
    <property type="hits" value="9 hits in 762 CRISPR screens"/>
</dbReference>
<dbReference type="ChiTaRS" id="NLGN4X">
    <property type="organism name" value="human"/>
</dbReference>
<dbReference type="EvolutionaryTrace" id="Q8N0W4"/>
<dbReference type="GeneWiki" id="NLGN4X"/>
<dbReference type="GenomeRNAi" id="57502"/>
<dbReference type="Pharos" id="Q8N0W4">
    <property type="development level" value="Tbio"/>
</dbReference>
<dbReference type="PRO" id="PR:Q8N0W4"/>
<dbReference type="Proteomes" id="UP000005640">
    <property type="component" value="Chromosome X"/>
</dbReference>
<dbReference type="RNAct" id="Q8N0W4">
    <property type="molecule type" value="protein"/>
</dbReference>
<dbReference type="Bgee" id="ENSG00000146938">
    <property type="expression patterns" value="Expressed in middle temporal gyrus and 159 other cell types or tissues"/>
</dbReference>
<dbReference type="ExpressionAtlas" id="Q8N0W4">
    <property type="expression patterns" value="baseline and differential"/>
</dbReference>
<dbReference type="GO" id="GO:0098985">
    <property type="term" value="C:asymmetric, glutamatergic, excitatory synapse"/>
    <property type="evidence" value="ECO:0000304"/>
    <property type="project" value="ARUK-UCL"/>
</dbReference>
<dbReference type="GO" id="GO:0009986">
    <property type="term" value="C:cell surface"/>
    <property type="evidence" value="ECO:0000314"/>
    <property type="project" value="UniProtKB"/>
</dbReference>
<dbReference type="GO" id="GO:0030425">
    <property type="term" value="C:dendrite"/>
    <property type="evidence" value="ECO:0000314"/>
    <property type="project" value="BHF-UCL"/>
</dbReference>
<dbReference type="GO" id="GO:0060076">
    <property type="term" value="C:excitatory synapse"/>
    <property type="evidence" value="ECO:0000314"/>
    <property type="project" value="BHF-UCL"/>
</dbReference>
<dbReference type="GO" id="GO:0098982">
    <property type="term" value="C:GABA-ergic synapse"/>
    <property type="evidence" value="ECO:0000314"/>
    <property type="project" value="SynGO"/>
</dbReference>
<dbReference type="GO" id="GO:0098978">
    <property type="term" value="C:glutamatergic synapse"/>
    <property type="evidence" value="ECO:0000314"/>
    <property type="project" value="SynGO"/>
</dbReference>
<dbReference type="GO" id="GO:0016020">
    <property type="term" value="C:membrane"/>
    <property type="evidence" value="ECO:0000304"/>
    <property type="project" value="ARUK-UCL"/>
</dbReference>
<dbReference type="GO" id="GO:0005886">
    <property type="term" value="C:plasma membrane"/>
    <property type="evidence" value="ECO:0000314"/>
    <property type="project" value="UniProtKB"/>
</dbReference>
<dbReference type="GO" id="GO:0098839">
    <property type="term" value="C:postsynaptic density membrane"/>
    <property type="evidence" value="ECO:0000314"/>
    <property type="project" value="SynGO"/>
</dbReference>
<dbReference type="GO" id="GO:0099634">
    <property type="term" value="C:postsynaptic specialization membrane"/>
    <property type="evidence" value="ECO:0000314"/>
    <property type="project" value="SynGO"/>
</dbReference>
<dbReference type="GO" id="GO:0098983">
    <property type="term" value="C:symmetric, GABA-ergic, inhibitory synapse"/>
    <property type="evidence" value="ECO:0000304"/>
    <property type="project" value="ARUK-UCL"/>
</dbReference>
<dbReference type="GO" id="GO:0045202">
    <property type="term" value="C:synapse"/>
    <property type="evidence" value="ECO:0000250"/>
    <property type="project" value="BHF-UCL"/>
</dbReference>
<dbReference type="GO" id="GO:0050839">
    <property type="term" value="F:cell adhesion molecule binding"/>
    <property type="evidence" value="ECO:0000304"/>
    <property type="project" value="BHF-UCL"/>
</dbReference>
<dbReference type="GO" id="GO:0031404">
    <property type="term" value="F:chloride ion binding"/>
    <property type="evidence" value="ECO:0000314"/>
    <property type="project" value="UniProtKB"/>
</dbReference>
<dbReference type="GO" id="GO:0042043">
    <property type="term" value="F:neurexin family protein binding"/>
    <property type="evidence" value="ECO:0000314"/>
    <property type="project" value="BHF-UCL"/>
</dbReference>
<dbReference type="GO" id="GO:0042803">
    <property type="term" value="F:protein homodimerization activity"/>
    <property type="evidence" value="ECO:0000314"/>
    <property type="project" value="UniProtKB"/>
</dbReference>
<dbReference type="GO" id="GO:0097110">
    <property type="term" value="F:scaffold protein binding"/>
    <property type="evidence" value="ECO:0000353"/>
    <property type="project" value="BHF-UCL"/>
</dbReference>
<dbReference type="GO" id="GO:0030534">
    <property type="term" value="P:adult behavior"/>
    <property type="evidence" value="ECO:0000315"/>
    <property type="project" value="BHF-UCL"/>
</dbReference>
<dbReference type="GO" id="GO:0003360">
    <property type="term" value="P:brainstem development"/>
    <property type="evidence" value="ECO:0000250"/>
    <property type="project" value="BHF-UCL"/>
</dbReference>
<dbReference type="GO" id="GO:0045216">
    <property type="term" value="P:cell-cell junction organization"/>
    <property type="evidence" value="ECO:0000303"/>
    <property type="project" value="UniProtKB"/>
</dbReference>
<dbReference type="GO" id="GO:0021549">
    <property type="term" value="P:cerebellum development"/>
    <property type="evidence" value="ECO:0000250"/>
    <property type="project" value="BHF-UCL"/>
</dbReference>
<dbReference type="GO" id="GO:0007612">
    <property type="term" value="P:learning"/>
    <property type="evidence" value="ECO:0000315"/>
    <property type="project" value="BHF-UCL"/>
</dbReference>
<dbReference type="GO" id="GO:0050804">
    <property type="term" value="P:modulation of chemical synaptic transmission"/>
    <property type="evidence" value="ECO:0000314"/>
    <property type="project" value="SynGO"/>
</dbReference>
<dbReference type="GO" id="GO:0090394">
    <property type="term" value="P:negative regulation of excitatory postsynaptic potential"/>
    <property type="evidence" value="ECO:0000314"/>
    <property type="project" value="BHF-UCL"/>
</dbReference>
<dbReference type="GO" id="GO:0007158">
    <property type="term" value="P:neuron cell-cell adhesion"/>
    <property type="evidence" value="ECO:0000304"/>
    <property type="project" value="BHF-UCL"/>
</dbReference>
<dbReference type="GO" id="GO:0030182">
    <property type="term" value="P:neuron differentiation"/>
    <property type="evidence" value="ECO:0000303"/>
    <property type="project" value="BHF-UCL"/>
</dbReference>
<dbReference type="GO" id="GO:0035265">
    <property type="term" value="P:organ growth"/>
    <property type="evidence" value="ECO:0000250"/>
    <property type="project" value="BHF-UCL"/>
</dbReference>
<dbReference type="GO" id="GO:0099054">
    <property type="term" value="P:presynapse assembly"/>
    <property type="evidence" value="ECO:0000304"/>
    <property type="project" value="ARUK-UCL"/>
</dbReference>
<dbReference type="GO" id="GO:0097105">
    <property type="term" value="P:presynaptic membrane assembly"/>
    <property type="evidence" value="ECO:0000314"/>
    <property type="project" value="BHF-UCL"/>
</dbReference>
<dbReference type="GO" id="GO:0051963">
    <property type="term" value="P:regulation of synapse assembly"/>
    <property type="evidence" value="ECO:0000314"/>
    <property type="project" value="SynGO"/>
</dbReference>
<dbReference type="GO" id="GO:0035176">
    <property type="term" value="P:social behavior"/>
    <property type="evidence" value="ECO:0000315"/>
    <property type="project" value="UniProtKB"/>
</dbReference>
<dbReference type="GO" id="GO:0050808">
    <property type="term" value="P:synapse organization"/>
    <property type="evidence" value="ECO:0000315"/>
    <property type="project" value="UniProtKB"/>
</dbReference>
<dbReference type="GO" id="GO:0071625">
    <property type="term" value="P:vocalization behavior"/>
    <property type="evidence" value="ECO:0000315"/>
    <property type="project" value="BHF-UCL"/>
</dbReference>
<dbReference type="FunFam" id="3.40.50.1820:FF:000001">
    <property type="entry name" value="Neuroligin 3 isoform"/>
    <property type="match status" value="1"/>
</dbReference>
<dbReference type="Gene3D" id="3.40.50.1820">
    <property type="entry name" value="alpha/beta hydrolase"/>
    <property type="match status" value="1"/>
</dbReference>
<dbReference type="InterPro" id="IPR029058">
    <property type="entry name" value="AB_hydrolase_fold"/>
</dbReference>
<dbReference type="InterPro" id="IPR002018">
    <property type="entry name" value="CarbesteraseB"/>
</dbReference>
<dbReference type="InterPro" id="IPR019819">
    <property type="entry name" value="Carboxylesterase_B_CS"/>
</dbReference>
<dbReference type="InterPro" id="IPR051093">
    <property type="entry name" value="Neuroligin/BSAL"/>
</dbReference>
<dbReference type="InterPro" id="IPR000460">
    <property type="entry name" value="Nlgn"/>
</dbReference>
<dbReference type="PANTHER" id="PTHR43903">
    <property type="entry name" value="NEUROLIGIN"/>
    <property type="match status" value="1"/>
</dbReference>
<dbReference type="Pfam" id="PF00135">
    <property type="entry name" value="COesterase"/>
    <property type="match status" value="1"/>
</dbReference>
<dbReference type="PRINTS" id="PR01090">
    <property type="entry name" value="NEUROLIGIN"/>
</dbReference>
<dbReference type="SUPFAM" id="SSF53474">
    <property type="entry name" value="alpha/beta-Hydrolases"/>
    <property type="match status" value="1"/>
</dbReference>
<dbReference type="PROSITE" id="PS00941">
    <property type="entry name" value="CARBOXYLESTERASE_B_2"/>
    <property type="match status" value="1"/>
</dbReference>
<comment type="function">
    <text evidence="9">Cell surface protein involved in cell-cell-interactions via its interactions with neurexin family members.</text>
</comment>
<comment type="subunit">
    <text evidence="1 5 9 10">Homodimer (PubMed:18093521). Interacts with NRXN1 in a calcium-dependent manner (PubMed:18093521). Interaction with neurexins is mediated by heparan sulfate glycan modification on neurexin (By similarity). Interacts through its C-terminus with DLG4/PSD-95 third PDZ domain (PubMed:11368788, PubMed:9278515).</text>
</comment>
<comment type="interaction">
    <interactant intactId="EBI-2862707">
        <id>Q8N0W4</id>
    </interactant>
    <interactant intactId="EBI-20994045">
        <id>Q63373-3</id>
        <label>Nrxn1</label>
    </interactant>
    <organismsDiffer>true</organismsDiffer>
    <experiments>5</experiments>
</comment>
<comment type="subcellular location">
    <subcellularLocation>
        <location>Cell membrane</location>
        <topology>Single-pass type I membrane protein</topology>
    </subcellularLocation>
    <subcellularLocation>
        <location>Postsynaptic density membrane</location>
    </subcellularLocation>
</comment>
<comment type="alternative products">
    <event type="alternative splicing"/>
    <isoform>
        <id>Q8N0W4-1</id>
        <name>1</name>
        <sequence type="displayed"/>
    </isoform>
    <isoform>
        <id>Q8N0W4-2</id>
        <name>2</name>
        <sequence type="described" ref="VSP_013270"/>
    </isoform>
</comment>
<comment type="tissue specificity">
    <text evidence="5">Expressed at highest levels in heart. Expressed at lower levels in liver, skeletal muscle and pancreas and at very low levels in brain.</text>
</comment>
<comment type="disease" evidence="6">
    <disease id="DI-02432">
        <name>Autism, X-linked 2</name>
        <acronym>AUTSX2</acronym>
        <description>A complex multifactorial, pervasive developmental disorder characterized by impairments in reciprocal social interaction and communication, restricted and stereotyped patterns of interests and activities, and the presence of developmental abnormalities by 3 years of age. Most individuals with autism also manifest moderate intellectual disability.</description>
        <dbReference type="MIM" id="300495"/>
    </disease>
    <text>Disease susceptibility is associated with variants affecting the gene represented in this entry.</text>
</comment>
<comment type="similarity">
    <text evidence="12">Belongs to the type-B carboxylesterase/lipase family.</text>
</comment>
<comment type="sequence caution" evidence="12">
    <conflict type="erroneous initiation">
        <sequence resource="EMBL-CDS" id="BAA86574"/>
    </conflict>
    <text>Extended N-terminus.</text>
</comment>
<evidence type="ECO:0000250" key="1">
    <source>
        <dbReference type="UniProtKB" id="B0F2B4"/>
    </source>
</evidence>
<evidence type="ECO:0000250" key="2">
    <source>
        <dbReference type="UniProtKB" id="Q62889"/>
    </source>
</evidence>
<evidence type="ECO:0000255" key="3"/>
<evidence type="ECO:0000256" key="4">
    <source>
        <dbReference type="SAM" id="MobiDB-lite"/>
    </source>
</evidence>
<evidence type="ECO:0000269" key="5">
    <source>
    </source>
</evidence>
<evidence type="ECO:0000269" key="6">
    <source>
    </source>
</evidence>
<evidence type="ECO:0000269" key="7">
    <source>
    </source>
</evidence>
<evidence type="ECO:0000269" key="8">
    <source>
    </source>
</evidence>
<evidence type="ECO:0000269" key="9">
    <source>
    </source>
</evidence>
<evidence type="ECO:0000269" key="10">
    <source>
    </source>
</evidence>
<evidence type="ECO:0000303" key="11">
    <source>
    </source>
</evidence>
<evidence type="ECO:0000305" key="12"/>
<evidence type="ECO:0007829" key="13">
    <source>
        <dbReference type="PDB" id="2XB6"/>
    </source>
</evidence>
<evidence type="ECO:0007829" key="14">
    <source>
        <dbReference type="PDB" id="3BE8"/>
    </source>
</evidence>
<gene>
    <name type="primary">NLGN4X</name>
    <name type="synonym">KIAA1260</name>
    <name type="synonym">NLGN4</name>
    <name type="ORF">UNQ365/PRO701</name>
</gene>
<protein>
    <recommendedName>
        <fullName>Neuroligin-4, X-linked</fullName>
        <shortName>Neuroligin X</shortName>
    </recommendedName>
    <alternativeName>
        <fullName>HNLX</fullName>
    </alternativeName>
</protein>
<keyword id="KW-0002">3D-structure</keyword>
<keyword id="KW-0025">Alternative splicing</keyword>
<keyword id="KW-1270">Asperger syndrome</keyword>
<keyword id="KW-1269">Autism</keyword>
<keyword id="KW-1268">Autism spectrum disorder</keyword>
<keyword id="KW-0130">Cell adhesion</keyword>
<keyword id="KW-1003">Cell membrane</keyword>
<keyword id="KW-0903">Direct protein sequencing</keyword>
<keyword id="KW-1015">Disulfide bond</keyword>
<keyword id="KW-0325">Glycoprotein</keyword>
<keyword id="KW-0472">Membrane</keyword>
<keyword id="KW-0597">Phosphoprotein</keyword>
<keyword id="KW-0628">Postsynaptic cell membrane</keyword>
<keyword id="KW-1267">Proteomics identification</keyword>
<keyword id="KW-1185">Reference proteome</keyword>
<keyword id="KW-0732">Signal</keyword>
<keyword id="KW-0770">Synapse</keyword>
<keyword id="KW-0812">Transmembrane</keyword>
<keyword id="KW-1133">Transmembrane helix</keyword>
<reference key="1">
    <citation type="journal article" date="2003" name="Nat. Genet.">
        <title>Mutations of the X-linked genes encoding neuroligins NLGN3 and NLGN4 are associated with autism.</title>
        <authorList>
            <person name="Jamain S."/>
            <person name="Quach H."/>
            <person name="Betancur C."/>
            <person name="Rastam M."/>
            <person name="Colineaux C."/>
            <person name="Gillberg I.C."/>
            <person name="Soderstrom H."/>
            <person name="Giros B."/>
            <person name="Leboyer M."/>
            <person name="Gillberg C."/>
            <person name="Bourgeron T."/>
            <person name="Nyden A."/>
            <person name="Philippe A."/>
            <person name="Cohen D."/>
            <person name="Chabane N."/>
            <person name="Mouren-Simeoni M.C."/>
            <person name="Brice A."/>
            <person name="Sponheim E."/>
            <person name="Spurkland I."/>
            <person name="Skjeldal O.H."/>
            <person name="Coleman M."/>
            <person name="Pearl P.L."/>
            <person name="Cohen I.L."/>
            <person name="Tsiouris J."/>
            <person name="Zappella M."/>
            <person name="Menchetti G."/>
            <person name="Pompella A."/>
            <person name="Aschauer H."/>
            <person name="Van Maldergem L."/>
        </authorList>
    </citation>
    <scope>NUCLEOTIDE SEQUENCE [MRNA] (ISOFORM 1)</scope>
    <scope>DISEASE</scope>
</reference>
<reference key="2">
    <citation type="journal article" date="1999" name="DNA Res.">
        <title>Prediction of the coding sequences of unidentified human genes. XV. The complete sequences of 100 new cDNA clones from brain which code for large proteins in vitro.</title>
        <authorList>
            <person name="Nagase T."/>
            <person name="Ishikawa K."/>
            <person name="Kikuno R."/>
            <person name="Hirosawa M."/>
            <person name="Nomura N."/>
            <person name="Ohara O."/>
        </authorList>
    </citation>
    <scope>NUCLEOTIDE SEQUENCE [LARGE SCALE MRNA] (ISOFORM 1)</scope>
    <source>
        <tissue>Brain</tissue>
    </source>
</reference>
<reference key="3">
    <citation type="journal article" date="2004" name="Genome Res.">
        <title>The status, quality, and expansion of the NIH full-length cDNA project: the Mammalian Gene Collection (MGC).</title>
        <authorList>
            <consortium name="The MGC Project Team"/>
        </authorList>
    </citation>
    <scope>NUCLEOTIDE SEQUENCE [LARGE SCALE MRNA] (ISOFORM 1)</scope>
    <source>
        <tissue>Lung</tissue>
    </source>
</reference>
<reference key="4">
    <citation type="journal article" date="2003" name="Genome Res.">
        <title>The secreted protein discovery initiative (SPDI), a large-scale effort to identify novel human secreted and transmembrane proteins: a bioinformatics assessment.</title>
        <authorList>
            <person name="Clark H.F."/>
            <person name="Gurney A.L."/>
            <person name="Abaya E."/>
            <person name="Baker K."/>
            <person name="Baldwin D.T."/>
            <person name="Brush J."/>
            <person name="Chen J."/>
            <person name="Chow B."/>
            <person name="Chui C."/>
            <person name="Crowley C."/>
            <person name="Currell B."/>
            <person name="Deuel B."/>
            <person name="Dowd P."/>
            <person name="Eaton D."/>
            <person name="Foster J.S."/>
            <person name="Grimaldi C."/>
            <person name="Gu Q."/>
            <person name="Hass P.E."/>
            <person name="Heldens S."/>
            <person name="Huang A."/>
            <person name="Kim H.S."/>
            <person name="Klimowski L."/>
            <person name="Jin Y."/>
            <person name="Johnson S."/>
            <person name="Lee J."/>
            <person name="Lewis L."/>
            <person name="Liao D."/>
            <person name="Mark M.R."/>
            <person name="Robbie E."/>
            <person name="Sanchez C."/>
            <person name="Schoenfeld J."/>
            <person name="Seshagiri S."/>
            <person name="Simmons L."/>
            <person name="Singh J."/>
            <person name="Smith V."/>
            <person name="Stinson J."/>
            <person name="Vagts A."/>
            <person name="Vandlen R.L."/>
            <person name="Watanabe C."/>
            <person name="Wieand D."/>
            <person name="Woods K."/>
            <person name="Xie M.-H."/>
            <person name="Yansura D.G."/>
            <person name="Yi S."/>
            <person name="Yu G."/>
            <person name="Yuan J."/>
            <person name="Zhang M."/>
            <person name="Zhang Z."/>
            <person name="Goddard A.D."/>
            <person name="Wood W.I."/>
            <person name="Godowski P.J."/>
            <person name="Gray A.M."/>
        </authorList>
    </citation>
    <scope>NUCLEOTIDE SEQUENCE [LARGE SCALE MRNA] OF 4-816 (ISOFORM 2)</scope>
</reference>
<reference key="5">
    <citation type="journal article" date="2004" name="Protein Sci.">
        <title>Signal peptide prediction based on analysis of experimentally verified cleavage sites.</title>
        <authorList>
            <person name="Zhang Z."/>
            <person name="Henzel W.J."/>
        </authorList>
    </citation>
    <scope>PROTEIN SEQUENCE OF 42-56</scope>
</reference>
<reference key="6">
    <citation type="journal article" date="1997" name="Science">
        <title>Binding of neuroligins to PSD-95.</title>
        <authorList>
            <person name="Irie M."/>
            <person name="Hata Y."/>
            <person name="Takeuchi M."/>
            <person name="Ichtchenko K."/>
            <person name="Toyoda A."/>
            <person name="Hirao K."/>
            <person name="Takai Y."/>
            <person name="Rosahl T.W."/>
            <person name="Suedhof T.C."/>
        </authorList>
    </citation>
    <scope>INTERACTION WITH DLG4</scope>
</reference>
<reference key="7">
    <citation type="journal article" date="2001" name="Biochem. J.">
        <title>Identification of a novel neuroligin in humans which binds to PSD-95 and has a widespread expression.</title>
        <authorList>
            <person name="Bolliger M.F."/>
            <person name="Frei K."/>
            <person name="Winterhalter K.H."/>
            <person name="Gloor S.M."/>
        </authorList>
    </citation>
    <scope>INTERACTION WITH DLG4</scope>
    <scope>TISSUE SPECIFICITY</scope>
</reference>
<reference key="8">
    <citation type="journal article" date="2004" name="Am. J. Hum. Genet.">
        <title>X-linked mental retardation and autism are associated with a mutation in the NLGN4 gene, a member of the neuroligin family.</title>
        <authorList>
            <person name="Laumonnier F."/>
            <person name="Bonnet-Brilhault F."/>
            <person name="Gomot M."/>
            <person name="Blanc R."/>
            <person name="David A."/>
            <person name="Moizard M.-P."/>
            <person name="Raynaud M."/>
            <person name="Ronce N."/>
            <person name="Lemonnier E."/>
            <person name="Calvas P."/>
            <person name="Laudier B."/>
            <person name="Chelly J."/>
            <person name="Fryns J.-P."/>
            <person name="Ropers H.-H."/>
            <person name="Hamel B.C.J."/>
            <person name="Andres C."/>
            <person name="Barthelemy C."/>
            <person name="Moraine C."/>
            <person name="Briault S."/>
        </authorList>
    </citation>
    <scope>INVOLVEMENT IN ATSX2</scope>
</reference>
<reference key="9">
    <citation type="journal article" date="2007" name="Neuron">
        <title>Structural analysis of the synaptic protein neuroligin and its beta-neurexin complex: determinants for folding and cell adhesion.</title>
        <authorList>
            <person name="Fabrichny I.P."/>
            <person name="Leone P."/>
            <person name="Sulzenbacher G."/>
            <person name="Comoletti D."/>
            <person name="Miller M.T."/>
            <person name="Taylor P."/>
            <person name="Bourne Y."/>
            <person name="Marchot P."/>
        </authorList>
    </citation>
    <scope>X-RAY CRYSTALLOGRAPHY (2.2 ANGSTROMS) OF 44-619 ALONE AND IN COMPLEX WITH RAT NRXN1</scope>
    <scope>FUNCTION</scope>
    <scope>GLYCOSYLATION AT ASN-102 AND ASN-511</scope>
    <scope>SUBUNIT</scope>
    <scope>DISULFIDE BONDS</scope>
</reference>
<reference key="10">
    <citation type="journal article" date="2006" name="Science">
        <title>The consensus coding sequences of human breast and colorectal cancers.</title>
        <authorList>
            <person name="Sjoeblom T."/>
            <person name="Jones S."/>
            <person name="Wood L.D."/>
            <person name="Parsons D.W."/>
            <person name="Lin J."/>
            <person name="Barber T.D."/>
            <person name="Mandelker D."/>
            <person name="Leary R.J."/>
            <person name="Ptak J."/>
            <person name="Silliman N."/>
            <person name="Szabo S."/>
            <person name="Buckhaults P."/>
            <person name="Farrell C."/>
            <person name="Meeh P."/>
            <person name="Markowitz S.D."/>
            <person name="Willis J."/>
            <person name="Dawson D."/>
            <person name="Willson J.K.V."/>
            <person name="Gazdar A.F."/>
            <person name="Hartigan J."/>
            <person name="Wu L."/>
            <person name="Liu C."/>
            <person name="Parmigiani G."/>
            <person name="Park B.H."/>
            <person name="Bachman K.E."/>
            <person name="Papadopoulos N."/>
            <person name="Vogelstein B."/>
            <person name="Kinzler K.W."/>
            <person name="Velculescu V.E."/>
        </authorList>
    </citation>
    <scope>VARIANT [LARGE SCALE ANALYSIS] SER-214</scope>
</reference>
<name>NLGNX_HUMAN</name>
<proteinExistence type="evidence at protein level"/>
<accession>Q8N0W4</accession>
<accession>Q6UX10</accession>
<accession>Q9ULG0</accession>